<protein>
    <recommendedName>
        <fullName evidence="1">Eukaryotic translation initiation factor 6</fullName>
        <shortName evidence="1">eIF-6</shortName>
    </recommendedName>
</protein>
<sequence length="246" mass="26308">MALRVDYEGSNDVGVFCTLTNSYCLVGVGGTQNFYSILEAELSDLIPVVHTSIASTRIVGRLTVGNRHGLLVPNATTDQELQHLRNSLPDEVAIRRVDERLSALGNVIACNDHVAIVHAEISAETEQALVEVLKVEVFRVSLAQNSLVGSYCILSSNGCLVAARTPPETQREIAALLQIPVVAGTCNRGSELIGAGMVVNDWVAFCGLDSTSTELSVVESIFKLGEQGAPTSISNQLRDTLIESML</sequence>
<evidence type="ECO:0000255" key="1">
    <source>
        <dbReference type="HAMAP-Rule" id="MF_03132"/>
    </source>
</evidence>
<evidence type="ECO:0000269" key="2">
    <source>
    </source>
</evidence>
<reference key="1">
    <citation type="journal article" date="1998" name="Science">
        <title>Genome sequence of the nematode C. elegans: a platform for investigating biology.</title>
        <authorList>
            <consortium name="The C. elegans sequencing consortium"/>
        </authorList>
    </citation>
    <scope>NUCLEOTIDE SEQUENCE [LARGE SCALE GENOMIC DNA]</scope>
    <source>
        <strain>Bristol N2</strain>
    </source>
</reference>
<reference key="2">
    <citation type="journal article" date="2007" name="Nature">
        <title>MicroRNA silencing through RISC recruitment of eIF6.</title>
        <authorList>
            <person name="Chendrimada T.P."/>
            <person name="Finn K.J."/>
            <person name="Ji X."/>
            <person name="Baillat D."/>
            <person name="Gregory R.I."/>
            <person name="Liebhaber S.A."/>
            <person name="Pasquinelli A.E."/>
            <person name="Shiekhattar R."/>
        </authorList>
    </citation>
    <scope>FUNCTION</scope>
</reference>
<gene>
    <name evidence="1" type="primary">eif-6</name>
    <name type="ORF">C47B2.5</name>
</gene>
<feature type="chain" id="PRO_0000153736" description="Eukaryotic translation initiation factor 6">
    <location>
        <begin position="1"/>
        <end position="246"/>
    </location>
</feature>
<name>IF6_CAEEL</name>
<accession>O62106</accession>
<proteinExistence type="inferred from homology"/>
<comment type="function">
    <text evidence="1 2">Binds to the 60S ribosomal subunit and prevents its association with the 40S ribosomal subunit to form the 80S initiation complex in the cytoplasm. May also be involved in ribosome biogenesis. Involved in miRNA-mediated gene silencing (PubMed:17507929).</text>
</comment>
<comment type="subunit">
    <text evidence="1">Monomer. Associates with the 60S ribosomal subunit.</text>
</comment>
<comment type="subcellular location">
    <subcellularLocation>
        <location evidence="1">Cytoplasm</location>
    </subcellularLocation>
    <subcellularLocation>
        <location evidence="1">Nucleus</location>
        <location evidence="1">Nucleolus</location>
    </subcellularLocation>
    <text evidence="1">Shuttles between cytoplasm and nucleus/nucleolus.</text>
</comment>
<comment type="similarity">
    <text evidence="1">Belongs to the eIF-6 family.</text>
</comment>
<organism>
    <name type="scientific">Caenorhabditis elegans</name>
    <dbReference type="NCBI Taxonomy" id="6239"/>
    <lineage>
        <taxon>Eukaryota</taxon>
        <taxon>Metazoa</taxon>
        <taxon>Ecdysozoa</taxon>
        <taxon>Nematoda</taxon>
        <taxon>Chromadorea</taxon>
        <taxon>Rhabditida</taxon>
        <taxon>Rhabditina</taxon>
        <taxon>Rhabditomorpha</taxon>
        <taxon>Rhabditoidea</taxon>
        <taxon>Rhabditidae</taxon>
        <taxon>Peloderinae</taxon>
        <taxon>Caenorhabditis</taxon>
    </lineage>
</organism>
<dbReference type="EMBL" id="Z99709">
    <property type="protein sequence ID" value="CAB16860.1"/>
    <property type="molecule type" value="Genomic_DNA"/>
</dbReference>
<dbReference type="PIR" id="T19988">
    <property type="entry name" value="T19988"/>
</dbReference>
<dbReference type="RefSeq" id="NP_493272.1">
    <property type="nucleotide sequence ID" value="NM_060871.8"/>
</dbReference>
<dbReference type="SMR" id="O62106"/>
<dbReference type="BioGRID" id="38566">
    <property type="interactions" value="64"/>
</dbReference>
<dbReference type="FunCoup" id="O62106">
    <property type="interactions" value="2431"/>
</dbReference>
<dbReference type="IntAct" id="O62106">
    <property type="interactions" value="2"/>
</dbReference>
<dbReference type="STRING" id="6239.C47B2.5.2"/>
<dbReference type="iPTMnet" id="O62106"/>
<dbReference type="PaxDb" id="6239-C47B2.5.2"/>
<dbReference type="PeptideAtlas" id="O62106"/>
<dbReference type="EnsemblMetazoa" id="C47B2.5.1">
    <property type="protein sequence ID" value="C47B2.5.1"/>
    <property type="gene ID" value="WBGene00001234"/>
</dbReference>
<dbReference type="GeneID" id="173169"/>
<dbReference type="KEGG" id="cel:CELE_C47B2.5"/>
<dbReference type="UCSC" id="C47B2.5.1">
    <property type="organism name" value="c. elegans"/>
</dbReference>
<dbReference type="AGR" id="WB:WBGene00001234"/>
<dbReference type="CTD" id="173169"/>
<dbReference type="WormBase" id="C47B2.5">
    <property type="protein sequence ID" value="CE17565"/>
    <property type="gene ID" value="WBGene00001234"/>
    <property type="gene designation" value="eif-6"/>
</dbReference>
<dbReference type="eggNOG" id="KOG3185">
    <property type="taxonomic scope" value="Eukaryota"/>
</dbReference>
<dbReference type="GeneTree" id="ENSGT00390000015972"/>
<dbReference type="HOGENOM" id="CLU_071894_0_0_1"/>
<dbReference type="InParanoid" id="O62106"/>
<dbReference type="OMA" id="WCAFCGM"/>
<dbReference type="OrthoDB" id="4155914at2759"/>
<dbReference type="PhylomeDB" id="O62106"/>
<dbReference type="PRO" id="PR:O62106"/>
<dbReference type="Proteomes" id="UP000001940">
    <property type="component" value="Chromosome I"/>
</dbReference>
<dbReference type="Bgee" id="WBGene00001234">
    <property type="expression patterns" value="Expressed in germ line (C elegans) and 4 other cell types or tissues"/>
</dbReference>
<dbReference type="GO" id="GO:0005829">
    <property type="term" value="C:cytosol"/>
    <property type="evidence" value="ECO:0000318"/>
    <property type="project" value="GO_Central"/>
</dbReference>
<dbReference type="GO" id="GO:0005730">
    <property type="term" value="C:nucleolus"/>
    <property type="evidence" value="ECO:0007669"/>
    <property type="project" value="UniProtKB-SubCell"/>
</dbReference>
<dbReference type="GO" id="GO:0005634">
    <property type="term" value="C:nucleus"/>
    <property type="evidence" value="ECO:0000318"/>
    <property type="project" value="GO_Central"/>
</dbReference>
<dbReference type="GO" id="GO:0043023">
    <property type="term" value="F:ribosomal large subunit binding"/>
    <property type="evidence" value="ECO:0000318"/>
    <property type="project" value="GO_Central"/>
</dbReference>
<dbReference type="GO" id="GO:0003743">
    <property type="term" value="F:translation initiation factor activity"/>
    <property type="evidence" value="ECO:0007669"/>
    <property type="project" value="UniProtKB-UniRule"/>
</dbReference>
<dbReference type="GO" id="GO:1902626">
    <property type="term" value="P:assembly of large subunit precursor of preribosome"/>
    <property type="evidence" value="ECO:0000318"/>
    <property type="project" value="GO_Central"/>
</dbReference>
<dbReference type="GO" id="GO:0042256">
    <property type="term" value="P:cytosolic ribosome assembly"/>
    <property type="evidence" value="ECO:0007669"/>
    <property type="project" value="UniProtKB-UniRule"/>
</dbReference>
<dbReference type="GO" id="GO:0000460">
    <property type="term" value="P:maturation of 5.8S rRNA"/>
    <property type="evidence" value="ECO:0000318"/>
    <property type="project" value="GO_Central"/>
</dbReference>
<dbReference type="GO" id="GO:0000470">
    <property type="term" value="P:maturation of LSU-rRNA"/>
    <property type="evidence" value="ECO:0000318"/>
    <property type="project" value="GO_Central"/>
</dbReference>
<dbReference type="GO" id="GO:0035195">
    <property type="term" value="P:miRNA-mediated post-transcriptional gene silencing"/>
    <property type="evidence" value="ECO:0000315"/>
    <property type="project" value="UniProtKB"/>
</dbReference>
<dbReference type="GO" id="GO:0000054">
    <property type="term" value="P:ribosomal subunit export from nucleus"/>
    <property type="evidence" value="ECO:0000318"/>
    <property type="project" value="GO_Central"/>
</dbReference>
<dbReference type="CDD" id="cd00527">
    <property type="entry name" value="IF6"/>
    <property type="match status" value="1"/>
</dbReference>
<dbReference type="FunFam" id="3.75.10.10:FF:000001">
    <property type="entry name" value="Eukaryotic translation initiation factor 6"/>
    <property type="match status" value="1"/>
</dbReference>
<dbReference type="Gene3D" id="3.75.10.10">
    <property type="entry name" value="L-arginine/glycine Amidinotransferase, Chain A"/>
    <property type="match status" value="1"/>
</dbReference>
<dbReference type="HAMAP" id="MF_00032">
    <property type="entry name" value="eIF_6"/>
    <property type="match status" value="1"/>
</dbReference>
<dbReference type="InterPro" id="IPR002769">
    <property type="entry name" value="eIF6"/>
</dbReference>
<dbReference type="NCBIfam" id="TIGR00323">
    <property type="entry name" value="eIF-6"/>
    <property type="match status" value="1"/>
</dbReference>
<dbReference type="PANTHER" id="PTHR10784">
    <property type="entry name" value="TRANSLATION INITIATION FACTOR 6"/>
    <property type="match status" value="1"/>
</dbReference>
<dbReference type="Pfam" id="PF01912">
    <property type="entry name" value="eIF-6"/>
    <property type="match status" value="1"/>
</dbReference>
<dbReference type="PIRSF" id="PIRSF006413">
    <property type="entry name" value="IF-6"/>
    <property type="match status" value="1"/>
</dbReference>
<dbReference type="SMART" id="SM00654">
    <property type="entry name" value="eIF6"/>
    <property type="match status" value="1"/>
</dbReference>
<dbReference type="SUPFAM" id="SSF55909">
    <property type="entry name" value="Pentein"/>
    <property type="match status" value="1"/>
</dbReference>
<keyword id="KW-0963">Cytoplasm</keyword>
<keyword id="KW-0396">Initiation factor</keyword>
<keyword id="KW-0539">Nucleus</keyword>
<keyword id="KW-0648">Protein biosynthesis</keyword>
<keyword id="KW-1185">Reference proteome</keyword>
<keyword id="KW-0690">Ribosome biogenesis</keyword>